<proteinExistence type="inferred from homology"/>
<gene>
    <name type="primary">petN</name>
    <name type="synonym">ycf6</name>
</gene>
<dbReference type="EMBL" id="AJ132265">
    <property type="protein sequence ID" value="CAA10628.1"/>
    <property type="molecule type" value="Genomic_DNA"/>
</dbReference>
<dbReference type="RefSeq" id="YP_010201201.1">
    <property type="nucleotide sequence ID" value="NC_058703.1"/>
</dbReference>
<dbReference type="SMR" id="O96807"/>
<dbReference type="GeneID" id="68638415"/>
<dbReference type="GO" id="GO:0009535">
    <property type="term" value="C:chloroplast thylakoid membrane"/>
    <property type="evidence" value="ECO:0007669"/>
    <property type="project" value="UniProtKB-SubCell"/>
</dbReference>
<dbReference type="GO" id="GO:0009512">
    <property type="term" value="C:cytochrome b6f complex"/>
    <property type="evidence" value="ECO:0007669"/>
    <property type="project" value="InterPro"/>
</dbReference>
<dbReference type="GO" id="GO:0045158">
    <property type="term" value="F:electron transporter, transferring electrons within cytochrome b6/f complex of photosystem II activity"/>
    <property type="evidence" value="ECO:0007669"/>
    <property type="project" value="InterPro"/>
</dbReference>
<dbReference type="GO" id="GO:0017004">
    <property type="term" value="P:cytochrome complex assembly"/>
    <property type="evidence" value="ECO:0007669"/>
    <property type="project" value="UniProtKB-UniRule"/>
</dbReference>
<dbReference type="GO" id="GO:0015979">
    <property type="term" value="P:photosynthesis"/>
    <property type="evidence" value="ECO:0007669"/>
    <property type="project" value="UniProtKB-KW"/>
</dbReference>
<dbReference type="HAMAP" id="MF_00395">
    <property type="entry name" value="Cytb6_f_PetN"/>
    <property type="match status" value="1"/>
</dbReference>
<dbReference type="InterPro" id="IPR036143">
    <property type="entry name" value="Cytochr_b6-f_cplx_su8_sf"/>
</dbReference>
<dbReference type="InterPro" id="IPR005497">
    <property type="entry name" value="Cytochrome_b6-f_cplx_su8"/>
</dbReference>
<dbReference type="Pfam" id="PF03742">
    <property type="entry name" value="PetN"/>
    <property type="match status" value="1"/>
</dbReference>
<dbReference type="SUPFAM" id="SSF103451">
    <property type="entry name" value="PetN subunit of the cytochrome b6f complex"/>
    <property type="match status" value="1"/>
</dbReference>
<name>PETN_SKECO</name>
<sequence>MDIISLGWAGVMTMFTFSLALVVWGRNGF</sequence>
<geneLocation type="chloroplast"/>
<accession>O96807</accession>
<keyword id="KW-0150">Chloroplast</keyword>
<keyword id="KW-0249">Electron transport</keyword>
<keyword id="KW-0472">Membrane</keyword>
<keyword id="KW-0602">Photosynthesis</keyword>
<keyword id="KW-0934">Plastid</keyword>
<keyword id="KW-0793">Thylakoid</keyword>
<keyword id="KW-0812">Transmembrane</keyword>
<keyword id="KW-1133">Transmembrane helix</keyword>
<keyword id="KW-0813">Transport</keyword>
<evidence type="ECO:0000250" key="1"/>
<evidence type="ECO:0000255" key="2"/>
<evidence type="ECO:0000305" key="3"/>
<protein>
    <recommendedName>
        <fullName>Cytochrome b6-f complex subunit 8</fullName>
    </recommendedName>
    <alternativeName>
        <fullName>Cytochrome b6-f complex subunit PetN</fullName>
    </alternativeName>
    <alternativeName>
        <fullName>Cytochrome b6-f complex subunit VIII</fullName>
    </alternativeName>
</protein>
<reference key="1">
    <citation type="submission" date="1999-01" db="EMBL/GenBank/DDBJ databases">
        <title>Plastid DNA sequences of Skeletonema costatum NIES 323.</title>
        <authorList>
            <person name="Tada N."/>
            <person name="Otsuka S."/>
            <person name="Oyaizu H."/>
            <person name="Matsumoto S."/>
        </authorList>
    </citation>
    <scope>NUCLEOTIDE SEQUENCE [GENOMIC DNA]</scope>
    <source>
        <strain>NIES-323 / Sk-85w</strain>
    </source>
</reference>
<feature type="chain" id="PRO_0000217130" description="Cytochrome b6-f complex subunit 8">
    <location>
        <begin position="1"/>
        <end position="29"/>
    </location>
</feature>
<feature type="transmembrane region" description="Helical" evidence="2">
    <location>
        <begin position="3"/>
        <end position="23"/>
    </location>
</feature>
<organism>
    <name type="scientific">Skeletonema costatum</name>
    <name type="common">Marine centric diatom</name>
    <name type="synonym">Melosira costata</name>
    <dbReference type="NCBI Taxonomy" id="2843"/>
    <lineage>
        <taxon>Eukaryota</taxon>
        <taxon>Sar</taxon>
        <taxon>Stramenopiles</taxon>
        <taxon>Ochrophyta</taxon>
        <taxon>Bacillariophyta</taxon>
        <taxon>Coscinodiscophyceae</taxon>
        <taxon>Thalassiosirophycidae</taxon>
        <taxon>Thalassiosirales</taxon>
        <taxon>Skeletonemataceae</taxon>
        <taxon>Skeletonema</taxon>
    </lineage>
</organism>
<comment type="function">
    <text evidence="1">Component of the cytochrome b6-f complex, which mediates electron transfer between photosystem II (PSII) and photosystem I (PSI), cyclic electron flow around PSI, and state transitions.</text>
</comment>
<comment type="subunit">
    <text evidence="1">The 4 large subunits of the cytochrome b6-f complex are cytochrome b6, subunit IV (17 kDa polypeptide, PetD), cytochrome f and the Rieske protein, while the 4 small subunits are PetG, PetL, PetM and PetN. The complex functions as a dimer (By similarity).</text>
</comment>
<comment type="subcellular location">
    <subcellularLocation>
        <location evidence="1">Plastid</location>
        <location evidence="1">Chloroplast thylakoid membrane</location>
        <topology evidence="1">Single-pass membrane protein</topology>
    </subcellularLocation>
</comment>
<comment type="similarity">
    <text evidence="3">Belongs to the PetN family.</text>
</comment>